<keyword id="KW-0997">Cell inner membrane</keyword>
<keyword id="KW-1003">Cell membrane</keyword>
<keyword id="KW-0378">Hydrolase</keyword>
<keyword id="KW-0472">Membrane</keyword>
<keyword id="KW-0479">Metal-binding</keyword>
<keyword id="KW-0482">Metalloprotease</keyword>
<keyword id="KW-0645">Protease</keyword>
<keyword id="KW-0812">Transmembrane</keyword>
<keyword id="KW-1133">Transmembrane helix</keyword>
<keyword id="KW-0862">Zinc</keyword>
<gene>
    <name evidence="1" type="primary">htpX</name>
    <name type="ordered locus">jhp_0861</name>
</gene>
<evidence type="ECO:0000255" key="1">
    <source>
        <dbReference type="HAMAP-Rule" id="MF_00188"/>
    </source>
</evidence>
<feature type="chain" id="PRO_0000138867" description="Protease HtpX homolog">
    <location>
        <begin position="1"/>
        <end position="310"/>
    </location>
</feature>
<feature type="transmembrane region" description="Helical" evidence="1">
    <location>
        <begin position="16"/>
        <end position="36"/>
    </location>
</feature>
<feature type="transmembrane region" description="Helical" evidence="1">
    <location>
        <begin position="55"/>
        <end position="75"/>
    </location>
</feature>
<feature type="transmembrane region" description="Helical" evidence="1">
    <location>
        <begin position="182"/>
        <end position="202"/>
    </location>
</feature>
<feature type="transmembrane region" description="Helical" evidence="1">
    <location>
        <begin position="214"/>
        <end position="234"/>
    </location>
</feature>
<feature type="active site" evidence="1">
    <location>
        <position position="167"/>
    </location>
</feature>
<feature type="binding site" evidence="1">
    <location>
        <position position="166"/>
    </location>
    <ligand>
        <name>Zn(2+)</name>
        <dbReference type="ChEBI" id="CHEBI:29105"/>
        <note>catalytic</note>
    </ligand>
</feature>
<feature type="binding site" evidence="1">
    <location>
        <position position="170"/>
    </location>
    <ligand>
        <name>Zn(2+)</name>
        <dbReference type="ChEBI" id="CHEBI:29105"/>
        <note>catalytic</note>
    </ligand>
</feature>
<feature type="binding site" evidence="1">
    <location>
        <position position="239"/>
    </location>
    <ligand>
        <name>Zn(2+)</name>
        <dbReference type="ChEBI" id="CHEBI:29105"/>
        <note>catalytic</note>
    </ligand>
</feature>
<protein>
    <recommendedName>
        <fullName evidence="1">Protease HtpX homolog</fullName>
        <ecNumber evidence="1">3.4.24.-</ecNumber>
    </recommendedName>
</protein>
<dbReference type="EC" id="3.4.24.-" evidence="1"/>
<dbReference type="EMBL" id="AE001439">
    <property type="protein sequence ID" value="AAD06444.1"/>
    <property type="molecule type" value="Genomic_DNA"/>
</dbReference>
<dbReference type="PIR" id="D71878">
    <property type="entry name" value="D71878"/>
</dbReference>
<dbReference type="RefSeq" id="WP_000180943.1">
    <property type="nucleotide sequence ID" value="NC_000921.1"/>
</dbReference>
<dbReference type="KEGG" id="hpj:jhp_0861"/>
<dbReference type="PATRIC" id="fig|85963.30.peg.103"/>
<dbReference type="eggNOG" id="COG0501">
    <property type="taxonomic scope" value="Bacteria"/>
</dbReference>
<dbReference type="Proteomes" id="UP000000804">
    <property type="component" value="Chromosome"/>
</dbReference>
<dbReference type="GO" id="GO:0005886">
    <property type="term" value="C:plasma membrane"/>
    <property type="evidence" value="ECO:0007669"/>
    <property type="project" value="UniProtKB-SubCell"/>
</dbReference>
<dbReference type="GO" id="GO:0004222">
    <property type="term" value="F:metalloendopeptidase activity"/>
    <property type="evidence" value="ECO:0007669"/>
    <property type="project" value="UniProtKB-UniRule"/>
</dbReference>
<dbReference type="GO" id="GO:0008270">
    <property type="term" value="F:zinc ion binding"/>
    <property type="evidence" value="ECO:0007669"/>
    <property type="project" value="UniProtKB-UniRule"/>
</dbReference>
<dbReference type="GO" id="GO:0006508">
    <property type="term" value="P:proteolysis"/>
    <property type="evidence" value="ECO:0007669"/>
    <property type="project" value="UniProtKB-KW"/>
</dbReference>
<dbReference type="CDD" id="cd07340">
    <property type="entry name" value="M48B_Htpx_like"/>
    <property type="match status" value="1"/>
</dbReference>
<dbReference type="Gene3D" id="3.30.2010.10">
    <property type="entry name" value="Metalloproteases ('zincins'), catalytic domain"/>
    <property type="match status" value="1"/>
</dbReference>
<dbReference type="HAMAP" id="MF_00188">
    <property type="entry name" value="Pept_M48_protease_HtpX"/>
    <property type="match status" value="1"/>
</dbReference>
<dbReference type="InterPro" id="IPR050083">
    <property type="entry name" value="HtpX_protease"/>
</dbReference>
<dbReference type="InterPro" id="IPR022919">
    <property type="entry name" value="Pept_M48_protease_HtpX"/>
</dbReference>
<dbReference type="InterPro" id="IPR001915">
    <property type="entry name" value="Peptidase_M48"/>
</dbReference>
<dbReference type="NCBIfam" id="NF002775">
    <property type="entry name" value="PRK02870.1"/>
    <property type="match status" value="1"/>
</dbReference>
<dbReference type="PANTHER" id="PTHR43221">
    <property type="entry name" value="PROTEASE HTPX"/>
    <property type="match status" value="1"/>
</dbReference>
<dbReference type="PANTHER" id="PTHR43221:SF1">
    <property type="entry name" value="PROTEASE HTPX"/>
    <property type="match status" value="1"/>
</dbReference>
<dbReference type="Pfam" id="PF01435">
    <property type="entry name" value="Peptidase_M48"/>
    <property type="match status" value="1"/>
</dbReference>
<proteinExistence type="inferred from homology"/>
<sequence length="310" mass="35471">MTNFEKIIAQNRLKTNAVLTTYCAIFAFIGLLVDAIRINANDLGIALFKLMTFQIFPTITIVMFVVAFVIILVCIQNFSSIMLSGDEYKLIDPSKVLSSKENQIHRLLLELLEEAKLHFEPKLYIINAPYMNAFASGWDESNSLIALTSALIERLDRDELKAVIAHELSHIRHNDIRLTMCVGILSNIMLLVANFSVYFFMGNRKNSGANLARMILWVLQIILPFLTLLLQMYLSRTREYMADSGAAFLMHDNKPMIRALQKISNDYTNNDYKEIDKNSTRSAAYLFNAEMFSTHPSIKNRIQSLRKRVI</sequence>
<accession>Q9ZKS4</accession>
<comment type="cofactor">
    <cofactor evidence="1">
        <name>Zn(2+)</name>
        <dbReference type="ChEBI" id="CHEBI:29105"/>
    </cofactor>
    <text evidence="1">Binds 1 zinc ion per subunit.</text>
</comment>
<comment type="subcellular location">
    <subcellularLocation>
        <location evidence="1">Cell inner membrane</location>
        <topology evidence="1">Multi-pass membrane protein</topology>
    </subcellularLocation>
</comment>
<comment type="similarity">
    <text evidence="1">Belongs to the peptidase M48B family.</text>
</comment>
<reference key="1">
    <citation type="journal article" date="1999" name="Nature">
        <title>Genomic sequence comparison of two unrelated isolates of the human gastric pathogen Helicobacter pylori.</title>
        <authorList>
            <person name="Alm R.A."/>
            <person name="Ling L.-S.L."/>
            <person name="Moir D.T."/>
            <person name="King B.L."/>
            <person name="Brown E.D."/>
            <person name="Doig P.C."/>
            <person name="Smith D.R."/>
            <person name="Noonan B."/>
            <person name="Guild B.C."/>
            <person name="deJonge B.L."/>
            <person name="Carmel G."/>
            <person name="Tummino P.J."/>
            <person name="Caruso A."/>
            <person name="Uria-Nickelsen M."/>
            <person name="Mills D.M."/>
            <person name="Ives C."/>
            <person name="Gibson R."/>
            <person name="Merberg D."/>
            <person name="Mills S.D."/>
            <person name="Jiang Q."/>
            <person name="Taylor D.E."/>
            <person name="Vovis G.F."/>
            <person name="Trust T.J."/>
        </authorList>
    </citation>
    <scope>NUCLEOTIDE SEQUENCE [LARGE SCALE GENOMIC DNA]</scope>
    <source>
        <strain>J99 / ATCC 700824</strain>
    </source>
</reference>
<organism>
    <name type="scientific">Helicobacter pylori (strain J99 / ATCC 700824)</name>
    <name type="common">Campylobacter pylori J99</name>
    <dbReference type="NCBI Taxonomy" id="85963"/>
    <lineage>
        <taxon>Bacteria</taxon>
        <taxon>Pseudomonadati</taxon>
        <taxon>Campylobacterota</taxon>
        <taxon>Epsilonproteobacteria</taxon>
        <taxon>Campylobacterales</taxon>
        <taxon>Helicobacteraceae</taxon>
        <taxon>Helicobacter</taxon>
    </lineage>
</organism>
<name>HTPX_HELPJ</name>